<proteinExistence type="evidence at protein level"/>
<evidence type="ECO:0000250" key="1"/>
<evidence type="ECO:0000250" key="2">
    <source>
        <dbReference type="UniProtKB" id="P56270"/>
    </source>
</evidence>
<evidence type="ECO:0000255" key="3">
    <source>
        <dbReference type="PROSITE-ProRule" id="PRU00042"/>
    </source>
</evidence>
<evidence type="ECO:0000256" key="4">
    <source>
        <dbReference type="SAM" id="MobiDB-lite"/>
    </source>
</evidence>
<evidence type="ECO:0000269" key="5">
    <source>
    </source>
</evidence>
<evidence type="ECO:0000269" key="6">
    <source>
    </source>
</evidence>
<evidence type="ECO:0000305" key="7"/>
<sequence>MFPVFPCTLLAPPFPVLGLDSRGVGGLMNSFPPPQGHAQNPLQVGAELQSRFFASQGCAQSPFQAAPAPPPTPQAPAAEPLQVDLLPVLAAAQESAAAAAAAAAAAAAVVTAPPAPAAASTVDTAALKQPPAPPPPPPAVSAPAAEAAPPAAAATIAAAAATAVVAPTSTVAVAPVASVLEKKTKSKGPYICALCAKEFKNGYNLRRHEAIHTGAKAGRVPSGAMKMPTMVPLSLLSVPQLSGASGGGGEAGAGGGTTAVAAGGVVTTTASGKRIRKNHACEMCGKAFRDVYHLNRHKLSHSDEKPYQCPVCQQRFKRKDRMSYHVRSHDGAVHKPYNCSHCGKSFSRPDHLNSHVRQVHSTERPFKCEKCEAAFATKDRLRAHTVRHEEKVPCHVCGKMLSSAYISDHMKVHSQGPHHVCELCNKGTGEVCPMAAAAAAAAAAAAAVVAAPPTAVGSLSGAEGVPVSSQPLPSQPW</sequence>
<gene>
    <name type="primary">Maz</name>
</gene>
<keyword id="KW-0010">Activator</keyword>
<keyword id="KW-0238">DNA-binding</keyword>
<keyword id="KW-0479">Metal-binding</keyword>
<keyword id="KW-0539">Nucleus</keyword>
<keyword id="KW-0597">Phosphoprotein</keyword>
<keyword id="KW-1185">Reference proteome</keyword>
<keyword id="KW-0677">Repeat</keyword>
<keyword id="KW-0804">Transcription</keyword>
<keyword id="KW-0805">Transcription regulation</keyword>
<keyword id="KW-0862">Zinc</keyword>
<keyword id="KW-0863">Zinc-finger</keyword>
<feature type="chain" id="PRO_0000047217" description="Myc-associated zinc finger protein">
    <location>
        <begin position="1"/>
        <end position="477"/>
    </location>
</feature>
<feature type="zinc finger region" description="C2H2-type 1" evidence="3">
    <location>
        <begin position="190"/>
        <end position="212"/>
    </location>
</feature>
<feature type="zinc finger region" description="C2H2-type 2" evidence="3">
    <location>
        <begin position="279"/>
        <end position="301"/>
    </location>
</feature>
<feature type="zinc finger region" description="C2H2-type 3" evidence="3">
    <location>
        <begin position="307"/>
        <end position="329"/>
    </location>
</feature>
<feature type="zinc finger region" description="C2H2-type 4" evidence="3">
    <location>
        <begin position="337"/>
        <end position="360"/>
    </location>
</feature>
<feature type="zinc finger region" description="C2H2-type 5" evidence="3">
    <location>
        <begin position="366"/>
        <end position="388"/>
    </location>
</feature>
<feature type="zinc finger region" description="C2H2-type 6; atypical" evidence="3">
    <location>
        <begin position="392"/>
        <end position="413"/>
    </location>
</feature>
<feature type="region of interest" description="Disordered" evidence="4">
    <location>
        <begin position="59"/>
        <end position="78"/>
    </location>
</feature>
<feature type="region of interest" description="Disordered" evidence="4">
    <location>
        <begin position="121"/>
        <end position="144"/>
    </location>
</feature>
<feature type="compositionally biased region" description="Pro residues" evidence="4">
    <location>
        <begin position="130"/>
        <end position="140"/>
    </location>
</feature>
<feature type="modified residue" description="Phosphoserine" evidence="2">
    <location>
        <position position="361"/>
    </location>
</feature>
<feature type="sequence conflict" description="In Ref. 2; BAA76280." evidence="7" ref="2">
    <original>Q</original>
    <variation>QQ</variation>
    <location>
        <position position="64"/>
    </location>
</feature>
<organism>
    <name type="scientific">Mus musculus</name>
    <name type="common">Mouse</name>
    <dbReference type="NCBI Taxonomy" id="10090"/>
    <lineage>
        <taxon>Eukaryota</taxon>
        <taxon>Metazoa</taxon>
        <taxon>Chordata</taxon>
        <taxon>Craniata</taxon>
        <taxon>Vertebrata</taxon>
        <taxon>Euteleostomi</taxon>
        <taxon>Mammalia</taxon>
        <taxon>Eutheria</taxon>
        <taxon>Euarchontoglires</taxon>
        <taxon>Glires</taxon>
        <taxon>Rodentia</taxon>
        <taxon>Myomorpha</taxon>
        <taxon>Muroidea</taxon>
        <taxon>Muridae</taxon>
        <taxon>Murinae</taxon>
        <taxon>Mus</taxon>
        <taxon>Mus</taxon>
    </lineage>
</organism>
<protein>
    <recommendedName>
        <fullName>Myc-associated zinc finger protein</fullName>
        <shortName>MAZI</shortName>
    </recommendedName>
    <alternativeName>
        <fullName>Pur-1</fullName>
    </alternativeName>
    <alternativeName>
        <fullName>Purine-binding transcription factor</fullName>
    </alternativeName>
</protein>
<accession>P56671</accession>
<accession>Q9R1W0</accession>
<comment type="function">
    <text evidence="2 5">Transcriptional regulator (By similarity). Acts as a transcriptional activator that binds to purine-rich GAGA sites found in the promoter of many genes including insulin I and II and islet amyloid polypeptide (PubMed:1454839).</text>
</comment>
<comment type="subunit">
    <text evidence="1">Interacts with BPTF.</text>
</comment>
<comment type="interaction">
    <interactant intactId="EBI-1809712">
        <id>P56671</id>
    </interactant>
    <interactant intactId="EBI-1798863">
        <id>P70211</id>
        <label>Dcc</label>
    </interactant>
    <organismsDiffer>false</organismsDiffer>
    <experiments>3</experiments>
</comment>
<comment type="interaction">
    <interactant intactId="EBI-1809712">
        <id>P56671</id>
    </interactant>
    <interactant intactId="EBI-852851">
        <id>P01100</id>
        <label>FOS</label>
    </interactant>
    <organismsDiffer>true</organismsDiffer>
    <experiments>2</experiments>
</comment>
<comment type="interaction">
    <interactant intactId="EBI-1809712">
        <id>P56671</id>
    </interactant>
    <interactant intactId="EBI-852823">
        <id>P05412</id>
        <label>JUN</label>
    </interactant>
    <organismsDiffer>true</organismsDiffer>
    <experiments>2</experiments>
</comment>
<comment type="subcellular location">
    <subcellularLocation>
        <location evidence="6">Nucleus</location>
    </subcellularLocation>
</comment>
<comment type="tissue specificity">
    <text evidence="6">Expressed in Purkinje cells in the brain (at protein level).</text>
</comment>
<dbReference type="EMBL" id="L04649">
    <property type="status" value="NOT_ANNOTATED_CDS"/>
    <property type="molecule type" value="mRNA"/>
</dbReference>
<dbReference type="EMBL" id="AB006360">
    <property type="protein sequence ID" value="BAA76280.1"/>
    <property type="molecule type" value="Genomic_DNA"/>
</dbReference>
<dbReference type="CCDS" id="CCDS40137.1"/>
<dbReference type="PIR" id="A47236">
    <property type="entry name" value="A47236"/>
</dbReference>
<dbReference type="SMR" id="P56671"/>
<dbReference type="FunCoup" id="P56671">
    <property type="interactions" value="972"/>
</dbReference>
<dbReference type="IntAct" id="P56671">
    <property type="interactions" value="3"/>
</dbReference>
<dbReference type="STRING" id="10090.ENSMUSP00000032916"/>
<dbReference type="GlyGen" id="P56671">
    <property type="glycosylation" value="1 site"/>
</dbReference>
<dbReference type="iPTMnet" id="P56671"/>
<dbReference type="PhosphoSitePlus" id="P56671"/>
<dbReference type="PaxDb" id="10090-ENSMUSP00000032916"/>
<dbReference type="ProteomicsDB" id="295962"/>
<dbReference type="Pumba" id="P56671"/>
<dbReference type="AGR" id="MGI:1338823"/>
<dbReference type="MGI" id="MGI:1338823">
    <property type="gene designation" value="Maz"/>
</dbReference>
<dbReference type="eggNOG" id="KOG1721">
    <property type="taxonomic scope" value="Eukaryota"/>
</dbReference>
<dbReference type="InParanoid" id="P56671"/>
<dbReference type="PhylomeDB" id="P56671"/>
<dbReference type="ChiTaRS" id="Maz">
    <property type="organism name" value="mouse"/>
</dbReference>
<dbReference type="PRO" id="PR:P56671"/>
<dbReference type="Proteomes" id="UP000000589">
    <property type="component" value="Unplaced"/>
</dbReference>
<dbReference type="RNAct" id="P56671">
    <property type="molecule type" value="protein"/>
</dbReference>
<dbReference type="GO" id="GO:0005737">
    <property type="term" value="C:cytoplasm"/>
    <property type="evidence" value="ECO:0000314"/>
    <property type="project" value="MGI"/>
</dbReference>
<dbReference type="GO" id="GO:0005634">
    <property type="term" value="C:nucleus"/>
    <property type="evidence" value="ECO:0000314"/>
    <property type="project" value="UniProtKB"/>
</dbReference>
<dbReference type="GO" id="GO:0003682">
    <property type="term" value="F:chromatin binding"/>
    <property type="evidence" value="ECO:0000314"/>
    <property type="project" value="MGI"/>
</dbReference>
<dbReference type="GO" id="GO:0000981">
    <property type="term" value="F:DNA-binding transcription factor activity, RNA polymerase II-specific"/>
    <property type="evidence" value="ECO:0000314"/>
    <property type="project" value="MGI"/>
</dbReference>
<dbReference type="GO" id="GO:0000978">
    <property type="term" value="F:RNA polymerase II cis-regulatory region sequence-specific DNA binding"/>
    <property type="evidence" value="ECO:0000314"/>
    <property type="project" value="MGI"/>
</dbReference>
<dbReference type="GO" id="GO:0008270">
    <property type="term" value="F:zinc ion binding"/>
    <property type="evidence" value="ECO:0007669"/>
    <property type="project" value="UniProtKB-KW"/>
</dbReference>
<dbReference type="GO" id="GO:0000122">
    <property type="term" value="P:negative regulation of transcription by RNA polymerase II"/>
    <property type="evidence" value="ECO:0000250"/>
    <property type="project" value="UniProtKB"/>
</dbReference>
<dbReference type="GO" id="GO:0045944">
    <property type="term" value="P:positive regulation of transcription by RNA polymerase II"/>
    <property type="evidence" value="ECO:0000314"/>
    <property type="project" value="MGI"/>
</dbReference>
<dbReference type="FunFam" id="3.30.160.60:FF:000780">
    <property type="entry name" value="myc-associated zinc finger protein isoform X1"/>
    <property type="match status" value="1"/>
</dbReference>
<dbReference type="FunFam" id="3.30.160.60:FF:000859">
    <property type="entry name" value="myc-associated zinc finger protein isoform X2"/>
    <property type="match status" value="1"/>
</dbReference>
<dbReference type="FunFam" id="3.30.160.60:FF:000095">
    <property type="entry name" value="Vascular endothelial zinc finger 1"/>
    <property type="match status" value="1"/>
</dbReference>
<dbReference type="FunFam" id="3.30.160.60:FF:000108">
    <property type="entry name" value="Vascular endothelial zinc finger 1"/>
    <property type="match status" value="1"/>
</dbReference>
<dbReference type="Gene3D" id="3.30.160.60">
    <property type="entry name" value="Classic Zinc Finger"/>
    <property type="match status" value="5"/>
</dbReference>
<dbReference type="InterPro" id="IPR050331">
    <property type="entry name" value="Zinc_finger"/>
</dbReference>
<dbReference type="InterPro" id="IPR036236">
    <property type="entry name" value="Znf_C2H2_sf"/>
</dbReference>
<dbReference type="InterPro" id="IPR013087">
    <property type="entry name" value="Znf_C2H2_type"/>
</dbReference>
<dbReference type="PANTHER" id="PTHR16515:SF49">
    <property type="entry name" value="GASTRULA ZINC FINGER PROTEIN XLCGF49.1-LIKE-RELATED"/>
    <property type="match status" value="1"/>
</dbReference>
<dbReference type="PANTHER" id="PTHR16515">
    <property type="entry name" value="PR DOMAIN ZINC FINGER PROTEIN"/>
    <property type="match status" value="1"/>
</dbReference>
<dbReference type="Pfam" id="PF00096">
    <property type="entry name" value="zf-C2H2"/>
    <property type="match status" value="3"/>
</dbReference>
<dbReference type="Pfam" id="PF13894">
    <property type="entry name" value="zf-C2H2_4"/>
    <property type="match status" value="1"/>
</dbReference>
<dbReference type="SMART" id="SM00355">
    <property type="entry name" value="ZnF_C2H2"/>
    <property type="match status" value="6"/>
</dbReference>
<dbReference type="SUPFAM" id="SSF57667">
    <property type="entry name" value="beta-beta-alpha zinc fingers"/>
    <property type="match status" value="3"/>
</dbReference>
<dbReference type="PROSITE" id="PS00028">
    <property type="entry name" value="ZINC_FINGER_C2H2_1"/>
    <property type="match status" value="5"/>
</dbReference>
<dbReference type="PROSITE" id="PS50157">
    <property type="entry name" value="ZINC_FINGER_C2H2_2"/>
    <property type="match status" value="5"/>
</dbReference>
<name>MAZ_MOUSE</name>
<reference key="1">
    <citation type="journal article" date="1992" name="Proc. Natl. Acad. Sci. U.S.A.">
        <title>Pur-1, a zinc-finger protein which binds to purine-rich sequences, activates an insulin promoter in heterologous cells.</title>
        <authorList>
            <person name="Kennedy G.C."/>
            <person name="Rutter W.J."/>
        </authorList>
    </citation>
    <scope>NUCLEOTIDE SEQUENCE [MRNA]</scope>
    <scope>FUNCTION</scope>
    <source>
        <tissue>Pancreatic tumor</tissue>
    </source>
</reference>
<reference key="2">
    <citation type="journal article" date="1999" name="Eur. J. Biochem.">
        <title>Structural organization and expression of the mouse gene for Pur-1, a highly conserved homolog of the human MAZ gene.</title>
        <authorList>
            <person name="Song J."/>
            <person name="Murakami H."/>
            <person name="Tsutsui H."/>
            <person name="Ugai H."/>
            <person name="Geltinger C."/>
            <person name="Murata T."/>
            <person name="Matsumura M."/>
            <person name="Itakura K."/>
            <person name="Kanazawa I."/>
            <person name="Sun K."/>
            <person name="Yokoyama K.K."/>
        </authorList>
    </citation>
    <scope>NUCLEOTIDE SEQUENCE [GENOMIC DNA]</scope>
    <source>
        <strain>129</strain>
        <tissue>Liver</tissue>
    </source>
</reference>
<reference key="3">
    <citation type="journal article" date="2015" name="Hum. Mol. Genet.">
        <title>Regulation of SPRY3 by X chromosome and PAR2-linked promoters in an autism susceptibility region.</title>
        <authorList>
            <person name="Ning Z."/>
            <person name="McLellan A.S."/>
            <person name="Ball M."/>
            <person name="Wynne F."/>
            <person name="O'Neill C."/>
            <person name="Mills W."/>
            <person name="Quinn J.P."/>
            <person name="Kleinjan D.A."/>
            <person name="Anney R.J."/>
            <person name="Carmody R.J."/>
            <person name="O'Keeffe G."/>
            <person name="Moore T."/>
        </authorList>
    </citation>
    <scope>SUBCELLULAR LOCATION</scope>
    <scope>TISSUE SPECIFICITY</scope>
</reference>